<name>COX1_SHEEP</name>
<comment type="function">
    <text evidence="3">Component of the cytochrome c oxidase, the last enzyme in the mitochondrial electron transport chain which drives oxidative phosphorylation. The respiratory chain contains 3 multisubunit complexes succinate dehydrogenase (complex II, CII), ubiquinol-cytochrome c oxidoreductase (cytochrome b-c1 complex, complex III, CIII) and cytochrome c oxidase (complex IV, CIV), that cooperate to transfer electrons derived from NADH and succinate to molecular oxygen, creating an electrochemical gradient over the inner membrane that drives transmembrane transport and the ATP synthase. Cytochrome c oxidase is the component of the respiratory chain that catalyzes the reduction of oxygen to water. Electrons originating from reduced cytochrome c in the intermembrane space (IMS) are transferred via the dinuclear copper A center (CU(A)) of subunit 2 and heme A of subunit 1 to the active site in subunit 1, a binuclear center (BNC) formed by heme A3 and copper B (CU(B)). The BNC reduces molecular oxygen to 2 water molecules using 4 electrons from cytochrome c in the IMS and 4 protons from the mitochondrial matrix.</text>
</comment>
<comment type="catalytic activity">
    <reaction evidence="3">
        <text>4 Fe(II)-[cytochrome c] + O2 + 8 H(+)(in) = 4 Fe(III)-[cytochrome c] + 2 H2O + 4 H(+)(out)</text>
        <dbReference type="Rhea" id="RHEA:11436"/>
        <dbReference type="Rhea" id="RHEA-COMP:10350"/>
        <dbReference type="Rhea" id="RHEA-COMP:14399"/>
        <dbReference type="ChEBI" id="CHEBI:15377"/>
        <dbReference type="ChEBI" id="CHEBI:15378"/>
        <dbReference type="ChEBI" id="CHEBI:15379"/>
        <dbReference type="ChEBI" id="CHEBI:29033"/>
        <dbReference type="ChEBI" id="CHEBI:29034"/>
        <dbReference type="EC" id="7.1.1.9"/>
    </reaction>
    <physiologicalReaction direction="left-to-right" evidence="3">
        <dbReference type="Rhea" id="RHEA:11437"/>
    </physiologicalReaction>
</comment>
<comment type="cofactor">
    <cofactor evidence="4">
        <name>heme</name>
        <dbReference type="ChEBI" id="CHEBI:30413"/>
    </cofactor>
    <text evidence="4">Binds 2 heme A groups non-covalently per subunit.</text>
</comment>
<comment type="cofactor">
    <cofactor evidence="4">
        <name>Cu cation</name>
        <dbReference type="ChEBI" id="CHEBI:23378"/>
    </cofactor>
    <text evidence="4">Binds a copper B center.</text>
</comment>
<comment type="pathway">
    <text evidence="3">Energy metabolism; oxidative phosphorylation.</text>
</comment>
<comment type="subunit">
    <text evidence="1 2 4">Component of the cytochrome c oxidase (complex IV, CIV), a multisubunit enzyme composed of 14 subunits. The complex is composed of a catalytic core of 3 subunits MT-CO1, MT-CO2 and MT-CO3, encoded in the mitochondrial DNA, and 11 supernumerary subunits COX4I, COX5A, COX5B, COX6A, COX6B, COX6C, COX7A, COX7B, COX7C, COX8 and NDUFA4, which are encoded in the nuclear genome (By similarity). The complex exists as a monomer or a dimer and forms supercomplexes (SCs) in the inner mitochondrial membrane with NADH-ubiquinone oxidoreductase (complex I, CI) and ubiquinol-cytochrome c oxidoreductase (cytochrome b-c1 complex, complex III, CIII), resulting in different assemblies (supercomplex SCI(1)III(2)IV(1) and megacomplex MCI(2)III(2)IV(2)) (PubMed:27654913). As a newly synthesized protein, rapidly incorporates into a multi-subunit assembly intermediate in the inner membrane, called MITRAC (mitochondrial translation regulation assembly intermediate of cytochrome c oxidase) complex, whose core components are COA3/MITRAC12 and COX14. Within the MITRAC complex, interacts with COA3 and with SMIM20/MITRAC7; the interaction with SMIM20 stabilizes the newly synthesized MT-CO1 and prevents its premature turnover. Interacts with TMEM177 in a COX20-dependent manner (By similarity).</text>
</comment>
<comment type="subcellular location">
    <subcellularLocation>
        <location evidence="4">Mitochondrion inner membrane</location>
        <topology evidence="4">Multi-pass membrane protein</topology>
    </subcellularLocation>
</comment>
<comment type="similarity">
    <text evidence="5">Belongs to the heme-copper respiratory oxidase family.</text>
</comment>
<geneLocation type="mitochondrion"/>
<accession>O78749</accession>
<organism>
    <name type="scientific">Ovis aries</name>
    <name type="common">Sheep</name>
    <dbReference type="NCBI Taxonomy" id="9940"/>
    <lineage>
        <taxon>Eukaryota</taxon>
        <taxon>Metazoa</taxon>
        <taxon>Chordata</taxon>
        <taxon>Craniata</taxon>
        <taxon>Vertebrata</taxon>
        <taxon>Euteleostomi</taxon>
        <taxon>Mammalia</taxon>
        <taxon>Eutheria</taxon>
        <taxon>Laurasiatheria</taxon>
        <taxon>Artiodactyla</taxon>
        <taxon>Ruminantia</taxon>
        <taxon>Pecora</taxon>
        <taxon>Bovidae</taxon>
        <taxon>Caprinae</taxon>
        <taxon>Ovis</taxon>
    </lineage>
</organism>
<evidence type="ECO:0000250" key="1">
    <source>
        <dbReference type="UniProtKB" id="P00395"/>
    </source>
</evidence>
<evidence type="ECO:0000250" key="2">
    <source>
        <dbReference type="UniProtKB" id="P00396"/>
    </source>
</evidence>
<evidence type="ECO:0000250" key="3">
    <source>
        <dbReference type="UniProtKB" id="P00401"/>
    </source>
</evidence>
<evidence type="ECO:0000269" key="4">
    <source>
    </source>
</evidence>
<evidence type="ECO:0000305" key="5"/>
<evidence type="ECO:0000312" key="6">
    <source>
        <dbReference type="Proteomes" id="UP000002356"/>
    </source>
</evidence>
<protein>
    <recommendedName>
        <fullName>Cytochrome c oxidase subunit 1</fullName>
        <ecNumber>7.1.1.9</ecNumber>
    </recommendedName>
    <alternativeName>
        <fullName>Cytochrome c oxidase polypeptide I</fullName>
    </alternativeName>
</protein>
<dbReference type="EC" id="7.1.1.9"/>
<dbReference type="EMBL" id="AF010406">
    <property type="protein sequence ID" value="AAD10098.1"/>
    <property type="molecule type" value="Genomic_DNA"/>
</dbReference>
<dbReference type="PIR" id="T11052">
    <property type="entry name" value="T11052"/>
</dbReference>
<dbReference type="RefSeq" id="NP_008408.1">
    <property type="nucleotide sequence ID" value="NC_001941.1"/>
</dbReference>
<dbReference type="PDB" id="5J4Z">
    <property type="method" value="EM"/>
    <property type="resolution" value="5.80 A"/>
    <property type="chains" value="BN=1-514"/>
</dbReference>
<dbReference type="PDB" id="5J7Y">
    <property type="method" value="EM"/>
    <property type="resolution" value="6.70 A"/>
    <property type="chains" value="BN=1-514"/>
</dbReference>
<dbReference type="PDBsum" id="5J4Z"/>
<dbReference type="PDBsum" id="5J7Y"/>
<dbReference type="SMR" id="O78749"/>
<dbReference type="STRING" id="9940.ENSOARP00000000003"/>
<dbReference type="BindingDB" id="O78749"/>
<dbReference type="ChEMBL" id="CHEMBL6011"/>
<dbReference type="DrugCentral" id="O78749"/>
<dbReference type="PaxDb" id="9940-ENSOARP00000000003"/>
<dbReference type="Ensembl" id="ENSOART00025000017">
    <property type="protein sequence ID" value="ENSOARP00025000004"/>
    <property type="gene ID" value="ENSOARG00025000017"/>
</dbReference>
<dbReference type="Ensembl" id="ENSOART00040000017">
    <property type="protein sequence ID" value="ENSOARP00040000004"/>
    <property type="gene ID" value="ENSOARG00040000017"/>
</dbReference>
<dbReference type="Ensembl" id="ENSOART00180000017">
    <property type="protein sequence ID" value="ENSOARP00180000004"/>
    <property type="gene ID" value="ENSOARG00180000017"/>
</dbReference>
<dbReference type="Ensembl" id="ENSOART00185000017">
    <property type="protein sequence ID" value="ENSOARP00185000004"/>
    <property type="gene ID" value="ENSOARG00185000017"/>
</dbReference>
<dbReference type="Ensembl" id="ENSOART00215000017">
    <property type="protein sequence ID" value="ENSOARP00215000004"/>
    <property type="gene ID" value="ENSOARG00215000017"/>
</dbReference>
<dbReference type="Ensembl" id="ENSOART00220000017">
    <property type="protein sequence ID" value="ENSOARP00220000004"/>
    <property type="gene ID" value="ENSOARG00220000017"/>
</dbReference>
<dbReference type="Ensembl" id="ENSOART00225000017">
    <property type="protein sequence ID" value="ENSOARP00225000004"/>
    <property type="gene ID" value="ENSOARG00225000017"/>
</dbReference>
<dbReference type="Ensembl" id="ENSOART00260000017">
    <property type="protein sequence ID" value="ENSOARP00260000004"/>
    <property type="gene ID" value="ENSOARG00260000017"/>
</dbReference>
<dbReference type="GeneID" id="808251"/>
<dbReference type="KEGG" id="oas:808251"/>
<dbReference type="CTD" id="4512"/>
<dbReference type="eggNOG" id="KOG4769">
    <property type="taxonomic scope" value="Eukaryota"/>
</dbReference>
<dbReference type="HOGENOM" id="CLU_011899_7_3_1"/>
<dbReference type="OMA" id="WAMMSIG"/>
<dbReference type="OrthoDB" id="10002679at2759"/>
<dbReference type="UniPathway" id="UPA00705"/>
<dbReference type="PRO" id="PR:O78749"/>
<dbReference type="Proteomes" id="UP000002356">
    <property type="component" value="Mitochondrion"/>
</dbReference>
<dbReference type="Bgee" id="ENSOARG00000000016">
    <property type="expression patterns" value="Expressed in adult mammalian kidney and 56 other cell types or tissues"/>
</dbReference>
<dbReference type="ExpressionAtlas" id="O78749">
    <property type="expression patterns" value="baseline"/>
</dbReference>
<dbReference type="GO" id="GO:0005743">
    <property type="term" value="C:mitochondrial inner membrane"/>
    <property type="evidence" value="ECO:0007669"/>
    <property type="project" value="UniProtKB-SubCell"/>
</dbReference>
<dbReference type="GO" id="GO:0045277">
    <property type="term" value="C:respiratory chain complex IV"/>
    <property type="evidence" value="ECO:0000250"/>
    <property type="project" value="UniProtKB"/>
</dbReference>
<dbReference type="GO" id="GO:0004129">
    <property type="term" value="F:cytochrome-c oxidase activity"/>
    <property type="evidence" value="ECO:0007669"/>
    <property type="project" value="UniProtKB-EC"/>
</dbReference>
<dbReference type="GO" id="GO:0020037">
    <property type="term" value="F:heme binding"/>
    <property type="evidence" value="ECO:0007669"/>
    <property type="project" value="InterPro"/>
</dbReference>
<dbReference type="GO" id="GO:0046872">
    <property type="term" value="F:metal ion binding"/>
    <property type="evidence" value="ECO:0007669"/>
    <property type="project" value="UniProtKB-KW"/>
</dbReference>
<dbReference type="GO" id="GO:0015990">
    <property type="term" value="P:electron transport coupled proton transport"/>
    <property type="evidence" value="ECO:0007669"/>
    <property type="project" value="TreeGrafter"/>
</dbReference>
<dbReference type="GO" id="GO:0006123">
    <property type="term" value="P:mitochondrial electron transport, cytochrome c to oxygen"/>
    <property type="evidence" value="ECO:0007669"/>
    <property type="project" value="TreeGrafter"/>
</dbReference>
<dbReference type="CDD" id="cd01663">
    <property type="entry name" value="Cyt_c_Oxidase_I"/>
    <property type="match status" value="1"/>
</dbReference>
<dbReference type="FunFam" id="1.20.210.10:FF:000001">
    <property type="entry name" value="Cytochrome c oxidase subunit 1"/>
    <property type="match status" value="1"/>
</dbReference>
<dbReference type="Gene3D" id="1.20.210.10">
    <property type="entry name" value="Cytochrome c oxidase-like, subunit I domain"/>
    <property type="match status" value="1"/>
</dbReference>
<dbReference type="InterPro" id="IPR023616">
    <property type="entry name" value="Cyt_c_oxase-like_su1_dom"/>
</dbReference>
<dbReference type="InterPro" id="IPR036927">
    <property type="entry name" value="Cyt_c_oxase-like_su1_sf"/>
</dbReference>
<dbReference type="InterPro" id="IPR000883">
    <property type="entry name" value="Cyt_C_Oxase_1"/>
</dbReference>
<dbReference type="InterPro" id="IPR023615">
    <property type="entry name" value="Cyt_c_Oxase_su1_BS"/>
</dbReference>
<dbReference type="InterPro" id="IPR033944">
    <property type="entry name" value="Cyt_c_oxase_su1_dom"/>
</dbReference>
<dbReference type="PANTHER" id="PTHR10422">
    <property type="entry name" value="CYTOCHROME C OXIDASE SUBUNIT 1"/>
    <property type="match status" value="1"/>
</dbReference>
<dbReference type="PANTHER" id="PTHR10422:SF18">
    <property type="entry name" value="CYTOCHROME C OXIDASE SUBUNIT 1"/>
    <property type="match status" value="1"/>
</dbReference>
<dbReference type="Pfam" id="PF00115">
    <property type="entry name" value="COX1"/>
    <property type="match status" value="1"/>
</dbReference>
<dbReference type="PRINTS" id="PR01165">
    <property type="entry name" value="CYCOXIDASEI"/>
</dbReference>
<dbReference type="SUPFAM" id="SSF81442">
    <property type="entry name" value="Cytochrome c oxidase subunit I-like"/>
    <property type="match status" value="1"/>
</dbReference>
<dbReference type="PROSITE" id="PS50855">
    <property type="entry name" value="COX1"/>
    <property type="match status" value="1"/>
</dbReference>
<dbReference type="PROSITE" id="PS00077">
    <property type="entry name" value="COX1_CUB"/>
    <property type="match status" value="1"/>
</dbReference>
<keyword id="KW-0002">3D-structure</keyword>
<keyword id="KW-0106">Calcium</keyword>
<keyword id="KW-0186">Copper</keyword>
<keyword id="KW-0249">Electron transport</keyword>
<keyword id="KW-0349">Heme</keyword>
<keyword id="KW-0408">Iron</keyword>
<keyword id="KW-0460">Magnesium</keyword>
<keyword id="KW-0472">Membrane</keyword>
<keyword id="KW-0479">Metal-binding</keyword>
<keyword id="KW-0496">Mitochondrion</keyword>
<keyword id="KW-0999">Mitochondrion inner membrane</keyword>
<keyword id="KW-1185">Reference proteome</keyword>
<keyword id="KW-0679">Respiratory chain</keyword>
<keyword id="KW-0915">Sodium</keyword>
<keyword id="KW-1278">Translocase</keyword>
<keyword id="KW-0812">Transmembrane</keyword>
<keyword id="KW-1133">Transmembrane helix</keyword>
<keyword id="KW-0813">Transport</keyword>
<sequence>MFINRWLFSTNHKDIGTLYLLFGAWAGMVGTALSLLIRAELGQPGTLLGDDQIYNVIVTAHAFVMIFFMVMPIMIGGFGNWLVPLMIGAPDMAFPRMNNMSFWLLPPSFLLLLASSMVEAGAGTGWTVYPPLAGNLAHAGASVDLTIFSLHLAGVSSILGAINFITTIINMKPPAMSQYQTPLFVWSVLITAVLLLLSLPVLAAGITMLLTDRNLNTTFFDPAGGGDPILYQHLFWFFGHPEVYILILPGFGMISHIVTYYSGKKEPFGYMGMVWAMMSIGFLGFIVWAHHMFTVGMDVDTRAYFTSATMIIAIPTGVKVFSWLATLHGGNIKWSPAMMWALGFIFLFTVGGLTGIVLANSSLDIVLHDTYYVVAHFHYVLSMGAVFAIMGGFVHWFPLFSGYTLNDTWAKIHFAIMFVGVNMTFFPQHFLGLSGMPRRYSDYPDAYTMWNTISSMGSFISLTAVMLMIFIIWEAFASKREVLTVDLTTTNLEWLNGCPPPYHTFEEPTYVNLK</sequence>
<proteinExistence type="evidence at protein level"/>
<feature type="chain" id="PRO_0000183418" description="Cytochrome c oxidase subunit 1">
    <location>
        <begin position="1"/>
        <end position="514"/>
    </location>
</feature>
<feature type="topological domain" description="Mitochondrial matrix" evidence="4">
    <location>
        <begin position="1"/>
        <end position="11"/>
    </location>
</feature>
<feature type="transmembrane region" description="Helical; Name=I" evidence="2">
    <location>
        <begin position="12"/>
        <end position="40"/>
    </location>
</feature>
<feature type="topological domain" description="Mitochondrial intermembrane" evidence="4">
    <location>
        <begin position="41"/>
        <end position="50"/>
    </location>
</feature>
<feature type="transmembrane region" description="Helical; Name=II" evidence="2">
    <location>
        <begin position="51"/>
        <end position="86"/>
    </location>
</feature>
<feature type="topological domain" description="Mitochondrial matrix" evidence="4">
    <location>
        <begin position="87"/>
        <end position="94"/>
    </location>
</feature>
<feature type="transmembrane region" description="Helical; Name=III" evidence="2">
    <location>
        <begin position="95"/>
        <end position="117"/>
    </location>
</feature>
<feature type="topological domain" description="Mitochondrial intermembrane" evidence="4">
    <location>
        <begin position="118"/>
        <end position="140"/>
    </location>
</feature>
<feature type="transmembrane region" description="Helical; Name=IV" evidence="2">
    <location>
        <begin position="141"/>
        <end position="170"/>
    </location>
</feature>
<feature type="topological domain" description="Mitochondrial matrix" evidence="4">
    <location>
        <begin position="171"/>
        <end position="182"/>
    </location>
</feature>
<feature type="transmembrane region" description="Helical; Name=V" evidence="2">
    <location>
        <begin position="183"/>
        <end position="212"/>
    </location>
</feature>
<feature type="topological domain" description="Mitochondrial intermembrane" evidence="4">
    <location>
        <begin position="213"/>
        <end position="227"/>
    </location>
</feature>
<feature type="transmembrane region" description="Helical; Name=VI" evidence="2">
    <location>
        <begin position="228"/>
        <end position="261"/>
    </location>
</feature>
<feature type="topological domain" description="Mitochondrial matrix" evidence="4">
    <location>
        <begin position="262"/>
        <end position="269"/>
    </location>
</feature>
<feature type="transmembrane region" description="Helical; Name=VII" evidence="2">
    <location>
        <begin position="270"/>
        <end position="286"/>
    </location>
</feature>
<feature type="topological domain" description="Mitochondrial intermembrane" evidence="4">
    <location>
        <begin position="287"/>
        <end position="298"/>
    </location>
</feature>
<feature type="transmembrane region" description="Helical; Name=VIII" evidence="2">
    <location>
        <begin position="299"/>
        <end position="327"/>
    </location>
</feature>
<feature type="topological domain" description="Mitochondrial matrix" evidence="4">
    <location>
        <begin position="328"/>
        <end position="335"/>
    </location>
</feature>
<feature type="transmembrane region" description="Helical; Name=IX" evidence="2">
    <location>
        <begin position="336"/>
        <end position="357"/>
    </location>
</feature>
<feature type="topological domain" description="Mitochondrial intermembrane" evidence="4">
    <location>
        <begin position="358"/>
        <end position="370"/>
    </location>
</feature>
<feature type="transmembrane region" description="Helical; Name=X" evidence="2">
    <location>
        <begin position="371"/>
        <end position="400"/>
    </location>
</feature>
<feature type="topological domain" description="Mitochondrial matrix" evidence="4">
    <location>
        <begin position="401"/>
        <end position="406"/>
    </location>
</feature>
<feature type="transmembrane region" description="Helical; Name=XI" evidence="2">
    <location>
        <begin position="407"/>
        <end position="433"/>
    </location>
</feature>
<feature type="topological domain" description="Mitochondrial intermembrane" evidence="4">
    <location>
        <begin position="434"/>
        <end position="446"/>
    </location>
</feature>
<feature type="transmembrane region" description="Helical; Name=XII" evidence="2">
    <location>
        <begin position="447"/>
        <end position="478"/>
    </location>
</feature>
<feature type="topological domain" description="Mitochondrial matrix" evidence="4">
    <location>
        <begin position="479"/>
        <end position="514"/>
    </location>
</feature>
<feature type="binding site" evidence="2">
    <location>
        <position position="40"/>
    </location>
    <ligand>
        <name>Na(+)</name>
        <dbReference type="ChEBI" id="CHEBI:29101"/>
    </ligand>
</feature>
<feature type="binding site" evidence="2">
    <location>
        <position position="45"/>
    </location>
    <ligand>
        <name>Na(+)</name>
        <dbReference type="ChEBI" id="CHEBI:29101"/>
    </ligand>
</feature>
<feature type="binding site" description="axial binding residue" evidence="4">
    <location>
        <position position="61"/>
    </location>
    <ligand>
        <name>Fe(II)-heme a</name>
        <dbReference type="ChEBI" id="CHEBI:61715"/>
        <note>low-spin</note>
    </ligand>
    <ligandPart>
        <name>Fe</name>
        <dbReference type="ChEBI" id="CHEBI:18248"/>
    </ligandPart>
</feature>
<feature type="binding site" evidence="4">
    <location>
        <position position="240"/>
    </location>
    <ligand>
        <name>Cu cation</name>
        <dbReference type="ChEBI" id="CHEBI:23378"/>
        <label>B</label>
    </ligand>
</feature>
<feature type="binding site" evidence="2">
    <location>
        <position position="244"/>
    </location>
    <ligand>
        <name>O2</name>
        <dbReference type="ChEBI" id="CHEBI:15379"/>
    </ligand>
</feature>
<feature type="binding site" evidence="4">
    <location>
        <position position="290"/>
    </location>
    <ligand>
        <name>Cu cation</name>
        <dbReference type="ChEBI" id="CHEBI:23378"/>
        <label>B</label>
    </ligand>
</feature>
<feature type="binding site" evidence="4">
    <location>
        <position position="291"/>
    </location>
    <ligand>
        <name>Cu cation</name>
        <dbReference type="ChEBI" id="CHEBI:23378"/>
        <label>B</label>
    </ligand>
</feature>
<feature type="binding site" evidence="2">
    <location>
        <position position="368"/>
    </location>
    <ligand>
        <name>Mg(2+)</name>
        <dbReference type="ChEBI" id="CHEBI:18420"/>
        <note>ligand shared with MT-CO2</note>
    </ligand>
</feature>
<feature type="binding site" evidence="2">
    <location>
        <position position="369"/>
    </location>
    <ligand>
        <name>Mg(2+)</name>
        <dbReference type="ChEBI" id="CHEBI:18420"/>
        <note>ligand shared with MT-CO2</note>
    </ligand>
</feature>
<feature type="binding site" description="axial binding residue" evidence="4">
    <location>
        <position position="376"/>
    </location>
    <ligand>
        <name>heme a3</name>
        <dbReference type="ChEBI" id="CHEBI:83282"/>
        <note>high-spin</note>
    </ligand>
    <ligandPart>
        <name>Fe</name>
        <dbReference type="ChEBI" id="CHEBI:18248"/>
    </ligandPart>
</feature>
<feature type="binding site" description="axial binding residue" evidence="4">
    <location>
        <position position="378"/>
    </location>
    <ligand>
        <name>Fe(II)-heme a</name>
        <dbReference type="ChEBI" id="CHEBI:61715"/>
        <note>low-spin</note>
    </ligand>
    <ligandPart>
        <name>Fe</name>
        <dbReference type="ChEBI" id="CHEBI:18248"/>
    </ligandPart>
</feature>
<feature type="binding site" evidence="2">
    <location>
        <position position="441"/>
    </location>
    <ligand>
        <name>Na(+)</name>
        <dbReference type="ChEBI" id="CHEBI:29101"/>
    </ligand>
</feature>
<feature type="cross-link" description="1'-histidyl-3'-tyrosine (His-Tyr)" evidence="2">
    <location>
        <begin position="240"/>
        <end position="244"/>
    </location>
</feature>
<reference key="1">
    <citation type="journal article" date="1998" name="J. Mol. Evol.">
        <title>The complete mitochondrial DNA sequence of the domestic sheep (Ovis aries) and comparison with the other major ovine haplotype.</title>
        <authorList>
            <person name="Hiendleder S."/>
            <person name="Lewalski H."/>
            <person name="Wassmuth R."/>
            <person name="Janke A."/>
        </authorList>
    </citation>
    <scope>NUCLEOTIDE SEQUENCE [LARGE SCALE GENOMIC DNA]</scope>
    <source>
        <strain evidence="6">Merinolandschaf</strain>
        <tissue>Liver</tissue>
    </source>
</reference>
<reference key="2">
    <citation type="journal article" date="2016" name="Nature">
        <title>The architecture of respiratory supercomplexes.</title>
        <authorList>
            <person name="Letts J.A."/>
            <person name="Fiedorczuk K."/>
            <person name="Sazanov L.A."/>
        </authorList>
    </citation>
    <scope>STRUCTURE BY ELECTRON MICROSCOPY (5.80 ANGSTROMS)</scope>
</reference>
<gene>
    <name type="primary">MT-CO1</name>
    <name type="synonym">COI</name>
    <name type="synonym">COXI</name>
    <name type="synonym">MTCO1</name>
</gene>